<gene>
    <name evidence="1" type="primary">ackA</name>
    <name type="ordered locus">Rv0409</name>
    <name type="ORF">MTCY22G10.05</name>
</gene>
<sequence length="385" mass="41318">MSSTVLVINSGSSSLKFQLVEPVAGMSRAAGIVERIGERSSPVADHAQALHRAFKMLAEDGIDLQTCGLVAVGHRVVHGGTEFHQPTLLDDTVIGKLEELSALAPLHNPPAVLGIKVARRLLANVAHVAVFDTAFFHDLPPAAATYAIDRDVADRWHIRRYGFHGTSHQYVSERAAAFLGRPLDGLNQIVLHLGNGASASAIARGRPVETSMGLTPLEGLVMGTRSGDLDPGVISYLWRTARMGVEDIESMLNHRSGMLGLAGERDFRRLRLVIETGDRSAQLAYEVFIHRLRKYLGAYLAVLGHTDVVSFTAGIGENDAAVRRDALAGLQGLGIALDQDRNLGPGHGARRISSDDSPIAVLVVPTNEELAIARDCLRVLGGRRA</sequence>
<name>ACKA_MYCTU</name>
<evidence type="ECO:0000255" key="1">
    <source>
        <dbReference type="HAMAP-Rule" id="MF_00020"/>
    </source>
</evidence>
<reference key="1">
    <citation type="journal article" date="1998" name="Nature">
        <title>Deciphering the biology of Mycobacterium tuberculosis from the complete genome sequence.</title>
        <authorList>
            <person name="Cole S.T."/>
            <person name="Brosch R."/>
            <person name="Parkhill J."/>
            <person name="Garnier T."/>
            <person name="Churcher C.M."/>
            <person name="Harris D.E."/>
            <person name="Gordon S.V."/>
            <person name="Eiglmeier K."/>
            <person name="Gas S."/>
            <person name="Barry C.E. III"/>
            <person name="Tekaia F."/>
            <person name="Badcock K."/>
            <person name="Basham D."/>
            <person name="Brown D."/>
            <person name="Chillingworth T."/>
            <person name="Connor R."/>
            <person name="Davies R.M."/>
            <person name="Devlin K."/>
            <person name="Feltwell T."/>
            <person name="Gentles S."/>
            <person name="Hamlin N."/>
            <person name="Holroyd S."/>
            <person name="Hornsby T."/>
            <person name="Jagels K."/>
            <person name="Krogh A."/>
            <person name="McLean J."/>
            <person name="Moule S."/>
            <person name="Murphy L.D."/>
            <person name="Oliver S."/>
            <person name="Osborne J."/>
            <person name="Quail M.A."/>
            <person name="Rajandream M.A."/>
            <person name="Rogers J."/>
            <person name="Rutter S."/>
            <person name="Seeger K."/>
            <person name="Skelton S."/>
            <person name="Squares S."/>
            <person name="Squares R."/>
            <person name="Sulston J.E."/>
            <person name="Taylor K."/>
            <person name="Whitehead S."/>
            <person name="Barrell B.G."/>
        </authorList>
    </citation>
    <scope>NUCLEOTIDE SEQUENCE [LARGE SCALE GENOMIC DNA]</scope>
    <source>
        <strain>ATCC 25618 / H37Rv</strain>
    </source>
</reference>
<reference key="2">
    <citation type="journal article" date="2011" name="Mol. Cell. Proteomics">
        <title>Proteogenomic analysis of Mycobacterium tuberculosis by high resolution mass spectrometry.</title>
        <authorList>
            <person name="Kelkar D.S."/>
            <person name="Kumar D."/>
            <person name="Kumar P."/>
            <person name="Balakrishnan L."/>
            <person name="Muthusamy B."/>
            <person name="Yadav A.K."/>
            <person name="Shrivastava P."/>
            <person name="Marimuthu A."/>
            <person name="Anand S."/>
            <person name="Sundaram H."/>
            <person name="Kingsbury R."/>
            <person name="Harsha H.C."/>
            <person name="Nair B."/>
            <person name="Prasad T.S."/>
            <person name="Chauhan D.S."/>
            <person name="Katoch K."/>
            <person name="Katoch V.M."/>
            <person name="Kumar P."/>
            <person name="Chaerkady R."/>
            <person name="Ramachandran S."/>
            <person name="Dash D."/>
            <person name="Pandey A."/>
        </authorList>
    </citation>
    <scope>IDENTIFICATION BY MASS SPECTROMETRY [LARGE SCALE ANALYSIS]</scope>
    <source>
        <strain>ATCC 25618 / H37Rv</strain>
    </source>
</reference>
<feature type="chain" id="PRO_0000107589" description="Acetate kinase">
    <location>
        <begin position="1"/>
        <end position="385"/>
    </location>
</feature>
<feature type="active site" description="Proton donor/acceptor" evidence="1">
    <location>
        <position position="132"/>
    </location>
</feature>
<feature type="binding site" evidence="1">
    <location>
        <position position="9"/>
    </location>
    <ligand>
        <name>Mg(2+)</name>
        <dbReference type="ChEBI" id="CHEBI:18420"/>
    </ligand>
</feature>
<feature type="binding site" evidence="1">
    <location>
        <position position="16"/>
    </location>
    <ligand>
        <name>ATP</name>
        <dbReference type="ChEBI" id="CHEBI:30616"/>
    </ligand>
</feature>
<feature type="binding site" evidence="1">
    <location>
        <position position="75"/>
    </location>
    <ligand>
        <name>substrate</name>
    </ligand>
</feature>
<feature type="binding site" evidence="1">
    <location>
        <begin position="192"/>
        <end position="196"/>
    </location>
    <ligand>
        <name>ATP</name>
        <dbReference type="ChEBI" id="CHEBI:30616"/>
    </ligand>
</feature>
<feature type="binding site" evidence="1">
    <location>
        <begin position="266"/>
        <end position="268"/>
    </location>
    <ligand>
        <name>ATP</name>
        <dbReference type="ChEBI" id="CHEBI:30616"/>
    </ligand>
</feature>
<feature type="binding site" evidence="1">
    <location>
        <begin position="314"/>
        <end position="318"/>
    </location>
    <ligand>
        <name>ATP</name>
        <dbReference type="ChEBI" id="CHEBI:30616"/>
    </ligand>
</feature>
<feature type="binding site" evidence="1">
    <location>
        <position position="368"/>
    </location>
    <ligand>
        <name>Mg(2+)</name>
        <dbReference type="ChEBI" id="CHEBI:18420"/>
    </ligand>
</feature>
<feature type="site" description="Transition state stabilizer" evidence="1">
    <location>
        <position position="164"/>
    </location>
</feature>
<feature type="site" description="Transition state stabilizer" evidence="1">
    <location>
        <position position="225"/>
    </location>
</feature>
<proteinExistence type="evidence at protein level"/>
<keyword id="KW-0067">ATP-binding</keyword>
<keyword id="KW-0963">Cytoplasm</keyword>
<keyword id="KW-0418">Kinase</keyword>
<keyword id="KW-0460">Magnesium</keyword>
<keyword id="KW-0479">Metal-binding</keyword>
<keyword id="KW-0547">Nucleotide-binding</keyword>
<keyword id="KW-1185">Reference proteome</keyword>
<keyword id="KW-0808">Transferase</keyword>
<accession>P9WQH1</accession>
<accession>L0T3G5</accession>
<accession>P63409</accession>
<accession>P96255</accession>
<organism>
    <name type="scientific">Mycobacterium tuberculosis (strain ATCC 25618 / H37Rv)</name>
    <dbReference type="NCBI Taxonomy" id="83332"/>
    <lineage>
        <taxon>Bacteria</taxon>
        <taxon>Bacillati</taxon>
        <taxon>Actinomycetota</taxon>
        <taxon>Actinomycetes</taxon>
        <taxon>Mycobacteriales</taxon>
        <taxon>Mycobacteriaceae</taxon>
        <taxon>Mycobacterium</taxon>
        <taxon>Mycobacterium tuberculosis complex</taxon>
    </lineage>
</organism>
<protein>
    <recommendedName>
        <fullName evidence="1">Acetate kinase</fullName>
        <ecNumber evidence="1">2.7.2.1</ecNumber>
    </recommendedName>
    <alternativeName>
        <fullName evidence="1">Acetokinase</fullName>
    </alternativeName>
</protein>
<comment type="function">
    <text evidence="1">Catalyzes the formation of acetyl phosphate from acetate and ATP. Can also catalyze the reverse reaction.</text>
</comment>
<comment type="catalytic activity">
    <reaction evidence="1">
        <text>acetate + ATP = acetyl phosphate + ADP</text>
        <dbReference type="Rhea" id="RHEA:11352"/>
        <dbReference type="ChEBI" id="CHEBI:22191"/>
        <dbReference type="ChEBI" id="CHEBI:30089"/>
        <dbReference type="ChEBI" id="CHEBI:30616"/>
        <dbReference type="ChEBI" id="CHEBI:456216"/>
        <dbReference type="EC" id="2.7.2.1"/>
    </reaction>
</comment>
<comment type="cofactor">
    <cofactor evidence="1">
        <name>Mg(2+)</name>
        <dbReference type="ChEBI" id="CHEBI:18420"/>
    </cofactor>
    <cofactor evidence="1">
        <name>Mn(2+)</name>
        <dbReference type="ChEBI" id="CHEBI:29035"/>
    </cofactor>
    <text evidence="1">Mg(2+). Can also accept Mn(2+).</text>
</comment>
<comment type="pathway">
    <text evidence="1">Metabolic intermediate biosynthesis; acetyl-CoA biosynthesis; acetyl-CoA from acetate: step 1/2.</text>
</comment>
<comment type="subunit">
    <text evidence="1">Homodimer.</text>
</comment>
<comment type="subcellular location">
    <subcellularLocation>
        <location evidence="1">Cytoplasm</location>
    </subcellularLocation>
</comment>
<comment type="similarity">
    <text evidence="1">Belongs to the acetokinase family.</text>
</comment>
<dbReference type="EC" id="2.7.2.1" evidence="1"/>
<dbReference type="EMBL" id="AL123456">
    <property type="protein sequence ID" value="CCP43140.1"/>
    <property type="molecule type" value="Genomic_DNA"/>
</dbReference>
<dbReference type="PIR" id="G70628">
    <property type="entry name" value="G70628"/>
</dbReference>
<dbReference type="RefSeq" id="NP_214923.1">
    <property type="nucleotide sequence ID" value="NC_000962.3"/>
</dbReference>
<dbReference type="RefSeq" id="WP_003402097.1">
    <property type="nucleotide sequence ID" value="NZ_NVQJ01000002.1"/>
</dbReference>
<dbReference type="SMR" id="P9WQH1"/>
<dbReference type="FunCoup" id="P9WQH1">
    <property type="interactions" value="172"/>
</dbReference>
<dbReference type="STRING" id="83332.Rv0409"/>
<dbReference type="PaxDb" id="83332-Rv0409"/>
<dbReference type="GeneID" id="886399"/>
<dbReference type="KEGG" id="mtu:Rv0409"/>
<dbReference type="KEGG" id="mtv:RVBD_0409"/>
<dbReference type="TubercuList" id="Rv0409"/>
<dbReference type="eggNOG" id="COG0282">
    <property type="taxonomic scope" value="Bacteria"/>
</dbReference>
<dbReference type="InParanoid" id="P9WQH1"/>
<dbReference type="OrthoDB" id="9802453at2"/>
<dbReference type="PhylomeDB" id="P9WQH1"/>
<dbReference type="BRENDA" id="2.7.2.1">
    <property type="organism ID" value="3445"/>
</dbReference>
<dbReference type="UniPathway" id="UPA00340">
    <property type="reaction ID" value="UER00458"/>
</dbReference>
<dbReference type="Proteomes" id="UP000001584">
    <property type="component" value="Chromosome"/>
</dbReference>
<dbReference type="GO" id="GO:0005737">
    <property type="term" value="C:cytoplasm"/>
    <property type="evidence" value="ECO:0007669"/>
    <property type="project" value="UniProtKB-SubCell"/>
</dbReference>
<dbReference type="GO" id="GO:0008776">
    <property type="term" value="F:acetate kinase activity"/>
    <property type="evidence" value="ECO:0000318"/>
    <property type="project" value="GO_Central"/>
</dbReference>
<dbReference type="GO" id="GO:0005524">
    <property type="term" value="F:ATP binding"/>
    <property type="evidence" value="ECO:0007669"/>
    <property type="project" value="UniProtKB-KW"/>
</dbReference>
<dbReference type="GO" id="GO:0000287">
    <property type="term" value="F:magnesium ion binding"/>
    <property type="evidence" value="ECO:0007669"/>
    <property type="project" value="UniProtKB-UniRule"/>
</dbReference>
<dbReference type="GO" id="GO:0006083">
    <property type="term" value="P:acetate metabolic process"/>
    <property type="evidence" value="ECO:0000318"/>
    <property type="project" value="GO_Central"/>
</dbReference>
<dbReference type="GO" id="GO:0006085">
    <property type="term" value="P:acetyl-CoA biosynthetic process"/>
    <property type="evidence" value="ECO:0007669"/>
    <property type="project" value="UniProtKB-UniRule"/>
</dbReference>
<dbReference type="CDD" id="cd24010">
    <property type="entry name" value="ASKHA_NBD_AcK_PK"/>
    <property type="match status" value="1"/>
</dbReference>
<dbReference type="Gene3D" id="3.30.420.40">
    <property type="match status" value="2"/>
</dbReference>
<dbReference type="HAMAP" id="MF_00020">
    <property type="entry name" value="Acetate_kinase"/>
    <property type="match status" value="1"/>
</dbReference>
<dbReference type="InterPro" id="IPR004372">
    <property type="entry name" value="Ac/propionate_kinase"/>
</dbReference>
<dbReference type="InterPro" id="IPR000890">
    <property type="entry name" value="Aliphatic_acid_kin_short-chain"/>
</dbReference>
<dbReference type="InterPro" id="IPR023865">
    <property type="entry name" value="Aliphatic_acid_kinase_CS"/>
</dbReference>
<dbReference type="InterPro" id="IPR043129">
    <property type="entry name" value="ATPase_NBD"/>
</dbReference>
<dbReference type="NCBIfam" id="TIGR00016">
    <property type="entry name" value="ackA"/>
    <property type="match status" value="1"/>
</dbReference>
<dbReference type="PANTHER" id="PTHR21060">
    <property type="entry name" value="ACETATE KINASE"/>
    <property type="match status" value="1"/>
</dbReference>
<dbReference type="PANTHER" id="PTHR21060:SF15">
    <property type="entry name" value="ACETATE KINASE-RELATED"/>
    <property type="match status" value="1"/>
</dbReference>
<dbReference type="Pfam" id="PF00871">
    <property type="entry name" value="Acetate_kinase"/>
    <property type="match status" value="1"/>
</dbReference>
<dbReference type="PIRSF" id="PIRSF000722">
    <property type="entry name" value="Acetate_prop_kin"/>
    <property type="match status" value="1"/>
</dbReference>
<dbReference type="PRINTS" id="PR00471">
    <property type="entry name" value="ACETATEKNASE"/>
</dbReference>
<dbReference type="SUPFAM" id="SSF53067">
    <property type="entry name" value="Actin-like ATPase domain"/>
    <property type="match status" value="2"/>
</dbReference>
<dbReference type="PROSITE" id="PS01075">
    <property type="entry name" value="ACETATE_KINASE_1"/>
    <property type="match status" value="1"/>
</dbReference>
<dbReference type="PROSITE" id="PS01076">
    <property type="entry name" value="ACETATE_KINASE_2"/>
    <property type="match status" value="1"/>
</dbReference>